<gene>
    <name evidence="1" type="primary">rpsC</name>
    <name type="ordered locus">PSPTO_0632</name>
</gene>
<proteinExistence type="inferred from homology"/>
<reference key="1">
    <citation type="journal article" date="2003" name="Proc. Natl. Acad. Sci. U.S.A.">
        <title>The complete genome sequence of the Arabidopsis and tomato pathogen Pseudomonas syringae pv. tomato DC3000.</title>
        <authorList>
            <person name="Buell C.R."/>
            <person name="Joardar V."/>
            <person name="Lindeberg M."/>
            <person name="Selengut J."/>
            <person name="Paulsen I.T."/>
            <person name="Gwinn M.L."/>
            <person name="Dodson R.J."/>
            <person name="DeBoy R.T."/>
            <person name="Durkin A.S."/>
            <person name="Kolonay J.F."/>
            <person name="Madupu R."/>
            <person name="Daugherty S.C."/>
            <person name="Brinkac L.M."/>
            <person name="Beanan M.J."/>
            <person name="Haft D.H."/>
            <person name="Nelson W.C."/>
            <person name="Davidsen T.M."/>
            <person name="Zafar N."/>
            <person name="Zhou L."/>
            <person name="Liu J."/>
            <person name="Yuan Q."/>
            <person name="Khouri H.M."/>
            <person name="Fedorova N.B."/>
            <person name="Tran B."/>
            <person name="Russell D."/>
            <person name="Berry K.J."/>
            <person name="Utterback T.R."/>
            <person name="Van Aken S.E."/>
            <person name="Feldblyum T.V."/>
            <person name="D'Ascenzo M."/>
            <person name="Deng W.-L."/>
            <person name="Ramos A.R."/>
            <person name="Alfano J.R."/>
            <person name="Cartinhour S."/>
            <person name="Chatterjee A.K."/>
            <person name="Delaney T.P."/>
            <person name="Lazarowitz S.G."/>
            <person name="Martin G.B."/>
            <person name="Schneider D.J."/>
            <person name="Tang X."/>
            <person name="Bender C.L."/>
            <person name="White O."/>
            <person name="Fraser C.M."/>
            <person name="Collmer A."/>
        </authorList>
    </citation>
    <scope>NUCLEOTIDE SEQUENCE [LARGE SCALE GENOMIC DNA]</scope>
    <source>
        <strain>ATCC BAA-871 / DC3000</strain>
    </source>
</reference>
<organism>
    <name type="scientific">Pseudomonas syringae pv. tomato (strain ATCC BAA-871 / DC3000)</name>
    <dbReference type="NCBI Taxonomy" id="223283"/>
    <lineage>
        <taxon>Bacteria</taxon>
        <taxon>Pseudomonadati</taxon>
        <taxon>Pseudomonadota</taxon>
        <taxon>Gammaproteobacteria</taxon>
        <taxon>Pseudomonadales</taxon>
        <taxon>Pseudomonadaceae</taxon>
        <taxon>Pseudomonas</taxon>
    </lineage>
</organism>
<name>RS3_PSESM</name>
<feature type="chain" id="PRO_0000130180" description="Small ribosomal subunit protein uS3">
    <location>
        <begin position="1"/>
        <end position="228"/>
    </location>
</feature>
<feature type="domain" description="KH type-2" evidence="1">
    <location>
        <begin position="39"/>
        <end position="107"/>
    </location>
</feature>
<comment type="function">
    <text evidence="1">Binds the lower part of the 30S subunit head. Binds mRNA in the 70S ribosome, positioning it for translation.</text>
</comment>
<comment type="subunit">
    <text evidence="1">Part of the 30S ribosomal subunit. Forms a tight complex with proteins S10 and S14.</text>
</comment>
<comment type="similarity">
    <text evidence="1">Belongs to the universal ribosomal protein uS3 family.</text>
</comment>
<accession>Q889W5</accession>
<keyword id="KW-1185">Reference proteome</keyword>
<keyword id="KW-0687">Ribonucleoprotein</keyword>
<keyword id="KW-0689">Ribosomal protein</keyword>
<keyword id="KW-0694">RNA-binding</keyword>
<keyword id="KW-0699">rRNA-binding</keyword>
<evidence type="ECO:0000255" key="1">
    <source>
        <dbReference type="HAMAP-Rule" id="MF_01309"/>
    </source>
</evidence>
<evidence type="ECO:0000305" key="2"/>
<protein>
    <recommendedName>
        <fullName evidence="1">Small ribosomal subunit protein uS3</fullName>
    </recommendedName>
    <alternativeName>
        <fullName evidence="2">30S ribosomal protein S3</fullName>
    </alternativeName>
</protein>
<dbReference type="EMBL" id="AE016853">
    <property type="protein sequence ID" value="AAO54174.1"/>
    <property type="molecule type" value="Genomic_DNA"/>
</dbReference>
<dbReference type="RefSeq" id="NP_790479.1">
    <property type="nucleotide sequence ID" value="NC_004578.1"/>
</dbReference>
<dbReference type="RefSeq" id="WP_003176422.1">
    <property type="nucleotide sequence ID" value="NC_004578.1"/>
</dbReference>
<dbReference type="SMR" id="Q889W5"/>
<dbReference type="STRING" id="223283.PSPTO_0632"/>
<dbReference type="GeneID" id="98113701"/>
<dbReference type="KEGG" id="pst:PSPTO_0632"/>
<dbReference type="PATRIC" id="fig|223283.9.peg.638"/>
<dbReference type="eggNOG" id="COG0092">
    <property type="taxonomic scope" value="Bacteria"/>
</dbReference>
<dbReference type="HOGENOM" id="CLU_058591_0_2_6"/>
<dbReference type="OrthoDB" id="9806396at2"/>
<dbReference type="PhylomeDB" id="Q889W5"/>
<dbReference type="PRO" id="PR:Q889W5"/>
<dbReference type="Proteomes" id="UP000002515">
    <property type="component" value="Chromosome"/>
</dbReference>
<dbReference type="GO" id="GO:0022627">
    <property type="term" value="C:cytosolic small ribosomal subunit"/>
    <property type="evidence" value="ECO:0007669"/>
    <property type="project" value="TreeGrafter"/>
</dbReference>
<dbReference type="GO" id="GO:0003729">
    <property type="term" value="F:mRNA binding"/>
    <property type="evidence" value="ECO:0007669"/>
    <property type="project" value="UniProtKB-UniRule"/>
</dbReference>
<dbReference type="GO" id="GO:0019843">
    <property type="term" value="F:rRNA binding"/>
    <property type="evidence" value="ECO:0007669"/>
    <property type="project" value="UniProtKB-UniRule"/>
</dbReference>
<dbReference type="GO" id="GO:0003735">
    <property type="term" value="F:structural constituent of ribosome"/>
    <property type="evidence" value="ECO:0007669"/>
    <property type="project" value="InterPro"/>
</dbReference>
<dbReference type="GO" id="GO:0006412">
    <property type="term" value="P:translation"/>
    <property type="evidence" value="ECO:0007669"/>
    <property type="project" value="UniProtKB-UniRule"/>
</dbReference>
<dbReference type="CDD" id="cd02412">
    <property type="entry name" value="KH-II_30S_S3"/>
    <property type="match status" value="1"/>
</dbReference>
<dbReference type="FunFam" id="3.30.1140.32:FF:000001">
    <property type="entry name" value="30S ribosomal protein S3"/>
    <property type="match status" value="1"/>
</dbReference>
<dbReference type="FunFam" id="3.30.300.20:FF:000001">
    <property type="entry name" value="30S ribosomal protein S3"/>
    <property type="match status" value="1"/>
</dbReference>
<dbReference type="Gene3D" id="3.30.300.20">
    <property type="match status" value="1"/>
</dbReference>
<dbReference type="Gene3D" id="3.30.1140.32">
    <property type="entry name" value="Ribosomal protein S3, C-terminal domain"/>
    <property type="match status" value="1"/>
</dbReference>
<dbReference type="HAMAP" id="MF_01309_B">
    <property type="entry name" value="Ribosomal_uS3_B"/>
    <property type="match status" value="1"/>
</dbReference>
<dbReference type="InterPro" id="IPR004087">
    <property type="entry name" value="KH_dom"/>
</dbReference>
<dbReference type="InterPro" id="IPR015946">
    <property type="entry name" value="KH_dom-like_a/b"/>
</dbReference>
<dbReference type="InterPro" id="IPR004044">
    <property type="entry name" value="KH_dom_type_2"/>
</dbReference>
<dbReference type="InterPro" id="IPR009019">
    <property type="entry name" value="KH_sf_prok-type"/>
</dbReference>
<dbReference type="InterPro" id="IPR036419">
    <property type="entry name" value="Ribosomal_S3_C_sf"/>
</dbReference>
<dbReference type="InterPro" id="IPR005704">
    <property type="entry name" value="Ribosomal_uS3_bac-typ"/>
</dbReference>
<dbReference type="InterPro" id="IPR001351">
    <property type="entry name" value="Ribosomal_uS3_C"/>
</dbReference>
<dbReference type="InterPro" id="IPR018280">
    <property type="entry name" value="Ribosomal_uS3_CS"/>
</dbReference>
<dbReference type="NCBIfam" id="TIGR01009">
    <property type="entry name" value="rpsC_bact"/>
    <property type="match status" value="1"/>
</dbReference>
<dbReference type="PANTHER" id="PTHR11760">
    <property type="entry name" value="30S/40S RIBOSOMAL PROTEIN S3"/>
    <property type="match status" value="1"/>
</dbReference>
<dbReference type="PANTHER" id="PTHR11760:SF19">
    <property type="entry name" value="SMALL RIBOSOMAL SUBUNIT PROTEIN US3C"/>
    <property type="match status" value="1"/>
</dbReference>
<dbReference type="Pfam" id="PF07650">
    <property type="entry name" value="KH_2"/>
    <property type="match status" value="1"/>
</dbReference>
<dbReference type="Pfam" id="PF00189">
    <property type="entry name" value="Ribosomal_S3_C"/>
    <property type="match status" value="1"/>
</dbReference>
<dbReference type="SMART" id="SM00322">
    <property type="entry name" value="KH"/>
    <property type="match status" value="1"/>
</dbReference>
<dbReference type="SUPFAM" id="SSF54814">
    <property type="entry name" value="Prokaryotic type KH domain (KH-domain type II)"/>
    <property type="match status" value="1"/>
</dbReference>
<dbReference type="SUPFAM" id="SSF54821">
    <property type="entry name" value="Ribosomal protein S3 C-terminal domain"/>
    <property type="match status" value="1"/>
</dbReference>
<dbReference type="PROSITE" id="PS50823">
    <property type="entry name" value="KH_TYPE_2"/>
    <property type="match status" value="1"/>
</dbReference>
<dbReference type="PROSITE" id="PS00548">
    <property type="entry name" value="RIBOSOMAL_S3"/>
    <property type="match status" value="1"/>
</dbReference>
<sequence length="228" mass="25753">MGQKVHPIGIRLGIVKEHTSVWYADGRTYADYLFADLKVREYLQDKLKSASVSRIDIHRPAQTARITIHTARPGIVIGKKGEDVEKLRQDLTKQMGVPVHINIEEIRKPELDGMLVAQSVAQQLERRVMFRRAMKRAVQNAMRIGAKGIKIQVSGRLGGAEIARTEWYREGRVPLHTLRADIDYANYEAHTTYGVIGVKVWIFKGEVIGGRQEELKPQAPAPRKKAAK</sequence>